<proteinExistence type="inferred from homology"/>
<sequence length="292" mass="33150">MFDDQDEIHPLLAGAPQTTEFRKLRKRIVREVREAIETYGMVERGARWLVCLSGGKDSYTLLAVLHELKWRGLLPVDLLACNLDQGQPGFPATVLPEFLSRMGVPHRIEYQDTYSIVMDKIPQGRTYCALCSRLRRGNLYRIAREEGCSAVVLGHHRDDILETFFMNLFHGGRLATMPPKLVNEDGDLFVYRPLAFVAEADCEKFARDMAYPIIPCDLCGSQEGLQRQQVKQILDGWEARSPGRRQVMFRALMNARPSHLLDPGLFDFLGLATAPRAAEERQDEPPHLRGEA</sequence>
<evidence type="ECO:0000255" key="1">
    <source>
        <dbReference type="HAMAP-Rule" id="MF_01850"/>
    </source>
</evidence>
<organism>
    <name type="scientific">Cereibacter sphaeroides (strain ATCC 17029 / ATH 2.4.9)</name>
    <name type="common">Rhodobacter sphaeroides</name>
    <dbReference type="NCBI Taxonomy" id="349101"/>
    <lineage>
        <taxon>Bacteria</taxon>
        <taxon>Pseudomonadati</taxon>
        <taxon>Pseudomonadota</taxon>
        <taxon>Alphaproteobacteria</taxon>
        <taxon>Rhodobacterales</taxon>
        <taxon>Paracoccaceae</taxon>
        <taxon>Cereibacter</taxon>
    </lineage>
</organism>
<protein>
    <recommendedName>
        <fullName evidence="1">tRNA-cytidine(32) 2-sulfurtransferase</fullName>
        <ecNumber evidence="1">2.8.1.-</ecNumber>
    </recommendedName>
    <alternativeName>
        <fullName evidence="1">Two-thiocytidine biosynthesis protein A</fullName>
    </alternativeName>
    <alternativeName>
        <fullName evidence="1">tRNA 2-thiocytidine biosynthesis protein TtcA</fullName>
    </alternativeName>
</protein>
<dbReference type="EC" id="2.8.1.-" evidence="1"/>
<dbReference type="EMBL" id="CP000577">
    <property type="protein sequence ID" value="ABN77825.1"/>
    <property type="molecule type" value="Genomic_DNA"/>
</dbReference>
<dbReference type="RefSeq" id="WP_002721425.1">
    <property type="nucleotide sequence ID" value="NC_009049.1"/>
</dbReference>
<dbReference type="SMR" id="A3PNA9"/>
<dbReference type="GeneID" id="67447836"/>
<dbReference type="KEGG" id="rsh:Rsph17029_2723"/>
<dbReference type="HOGENOM" id="CLU_026481_0_0_5"/>
<dbReference type="GO" id="GO:0005737">
    <property type="term" value="C:cytoplasm"/>
    <property type="evidence" value="ECO:0007669"/>
    <property type="project" value="UniProtKB-SubCell"/>
</dbReference>
<dbReference type="GO" id="GO:0051539">
    <property type="term" value="F:4 iron, 4 sulfur cluster binding"/>
    <property type="evidence" value="ECO:0007669"/>
    <property type="project" value="UniProtKB-UniRule"/>
</dbReference>
<dbReference type="GO" id="GO:0005524">
    <property type="term" value="F:ATP binding"/>
    <property type="evidence" value="ECO:0007669"/>
    <property type="project" value="UniProtKB-UniRule"/>
</dbReference>
<dbReference type="GO" id="GO:0000287">
    <property type="term" value="F:magnesium ion binding"/>
    <property type="evidence" value="ECO:0007669"/>
    <property type="project" value="UniProtKB-UniRule"/>
</dbReference>
<dbReference type="GO" id="GO:0016783">
    <property type="term" value="F:sulfurtransferase activity"/>
    <property type="evidence" value="ECO:0007669"/>
    <property type="project" value="UniProtKB-UniRule"/>
</dbReference>
<dbReference type="GO" id="GO:0000049">
    <property type="term" value="F:tRNA binding"/>
    <property type="evidence" value="ECO:0007669"/>
    <property type="project" value="UniProtKB-KW"/>
</dbReference>
<dbReference type="GO" id="GO:0034227">
    <property type="term" value="P:tRNA thio-modification"/>
    <property type="evidence" value="ECO:0007669"/>
    <property type="project" value="UniProtKB-UniRule"/>
</dbReference>
<dbReference type="CDD" id="cd24138">
    <property type="entry name" value="TtcA-like"/>
    <property type="match status" value="1"/>
</dbReference>
<dbReference type="Gene3D" id="3.40.50.620">
    <property type="entry name" value="HUPs"/>
    <property type="match status" value="1"/>
</dbReference>
<dbReference type="HAMAP" id="MF_01850">
    <property type="entry name" value="TtcA"/>
    <property type="match status" value="1"/>
</dbReference>
<dbReference type="InterPro" id="IPR014729">
    <property type="entry name" value="Rossmann-like_a/b/a_fold"/>
</dbReference>
<dbReference type="InterPro" id="IPR011063">
    <property type="entry name" value="TilS/TtcA_N"/>
</dbReference>
<dbReference type="InterPro" id="IPR012089">
    <property type="entry name" value="tRNA_Cyd_32_2_STrfase"/>
</dbReference>
<dbReference type="InterPro" id="IPR035107">
    <property type="entry name" value="tRNA_thiolation_TtcA_Ctu1"/>
</dbReference>
<dbReference type="NCBIfam" id="NF007972">
    <property type="entry name" value="PRK10696.1"/>
    <property type="match status" value="1"/>
</dbReference>
<dbReference type="PANTHER" id="PTHR43686:SF1">
    <property type="entry name" value="AMINOTRAN_5 DOMAIN-CONTAINING PROTEIN"/>
    <property type="match status" value="1"/>
</dbReference>
<dbReference type="PANTHER" id="PTHR43686">
    <property type="entry name" value="SULFURTRANSFERASE-RELATED"/>
    <property type="match status" value="1"/>
</dbReference>
<dbReference type="Pfam" id="PF01171">
    <property type="entry name" value="ATP_bind_3"/>
    <property type="match status" value="1"/>
</dbReference>
<dbReference type="PIRSF" id="PIRSF004976">
    <property type="entry name" value="ATPase_YdaO"/>
    <property type="match status" value="1"/>
</dbReference>
<dbReference type="SUPFAM" id="SSF52402">
    <property type="entry name" value="Adenine nucleotide alpha hydrolases-like"/>
    <property type="match status" value="1"/>
</dbReference>
<comment type="function">
    <text evidence="1">Catalyzes the ATP-dependent 2-thiolation of cytidine in position 32 of tRNA, to form 2-thiocytidine (s(2)C32). The sulfur atoms are provided by the cysteine/cysteine desulfurase (IscS) system.</text>
</comment>
<comment type="catalytic activity">
    <reaction evidence="1">
        <text>cytidine(32) in tRNA + S-sulfanyl-L-cysteinyl-[cysteine desulfurase] + AH2 + ATP = 2-thiocytidine(32) in tRNA + L-cysteinyl-[cysteine desulfurase] + A + AMP + diphosphate + H(+)</text>
        <dbReference type="Rhea" id="RHEA:57048"/>
        <dbReference type="Rhea" id="RHEA-COMP:10288"/>
        <dbReference type="Rhea" id="RHEA-COMP:12157"/>
        <dbReference type="Rhea" id="RHEA-COMP:12158"/>
        <dbReference type="Rhea" id="RHEA-COMP:14821"/>
        <dbReference type="ChEBI" id="CHEBI:13193"/>
        <dbReference type="ChEBI" id="CHEBI:15378"/>
        <dbReference type="ChEBI" id="CHEBI:17499"/>
        <dbReference type="ChEBI" id="CHEBI:29950"/>
        <dbReference type="ChEBI" id="CHEBI:30616"/>
        <dbReference type="ChEBI" id="CHEBI:33019"/>
        <dbReference type="ChEBI" id="CHEBI:61963"/>
        <dbReference type="ChEBI" id="CHEBI:82748"/>
        <dbReference type="ChEBI" id="CHEBI:141453"/>
        <dbReference type="ChEBI" id="CHEBI:456215"/>
    </reaction>
    <physiologicalReaction direction="left-to-right" evidence="1">
        <dbReference type="Rhea" id="RHEA:57049"/>
    </physiologicalReaction>
</comment>
<comment type="cofactor">
    <cofactor evidence="1">
        <name>Mg(2+)</name>
        <dbReference type="ChEBI" id="CHEBI:18420"/>
    </cofactor>
</comment>
<comment type="cofactor">
    <cofactor evidence="1">
        <name>[4Fe-4S] cluster</name>
        <dbReference type="ChEBI" id="CHEBI:49883"/>
    </cofactor>
    <text evidence="1">Binds 1 [4Fe-4S] cluster per subunit. The cluster is chelated by three Cys residues, the fourth Fe has a free coordination site that may bind a sulfur atom transferred from the persulfide of IscS.</text>
</comment>
<comment type="pathway">
    <text evidence="1">tRNA modification.</text>
</comment>
<comment type="subunit">
    <text evidence="1">Homodimer.</text>
</comment>
<comment type="subcellular location">
    <subcellularLocation>
        <location evidence="1">Cytoplasm</location>
    </subcellularLocation>
</comment>
<comment type="miscellaneous">
    <text evidence="1">The thiolation reaction likely consists of two steps: a first activation step by ATP to form an adenylated intermediate of the target base of tRNA, and a second nucleophilic substitution step of the sulfur (S) atom supplied by the hydrosulfide attached to the Fe-S cluster.</text>
</comment>
<comment type="similarity">
    <text evidence="1">Belongs to the TtcA family.</text>
</comment>
<gene>
    <name evidence="1" type="primary">ttcA</name>
    <name type="ordered locus">Rsph17029_2723</name>
</gene>
<name>TTCA_CERS1</name>
<keyword id="KW-0004">4Fe-4S</keyword>
<keyword id="KW-0067">ATP-binding</keyword>
<keyword id="KW-0963">Cytoplasm</keyword>
<keyword id="KW-0408">Iron</keyword>
<keyword id="KW-0411">Iron-sulfur</keyword>
<keyword id="KW-0460">Magnesium</keyword>
<keyword id="KW-0479">Metal-binding</keyword>
<keyword id="KW-0547">Nucleotide-binding</keyword>
<keyword id="KW-0694">RNA-binding</keyword>
<keyword id="KW-0808">Transferase</keyword>
<keyword id="KW-0819">tRNA processing</keyword>
<keyword id="KW-0820">tRNA-binding</keyword>
<accession>A3PNA9</accession>
<reference key="1">
    <citation type="submission" date="2007-02" db="EMBL/GenBank/DDBJ databases">
        <title>Complete sequence of chromosome 1 of Rhodobacter sphaeroides ATCC 17029.</title>
        <authorList>
            <person name="Copeland A."/>
            <person name="Lucas S."/>
            <person name="Lapidus A."/>
            <person name="Barry K."/>
            <person name="Detter J.C."/>
            <person name="Glavina del Rio T."/>
            <person name="Hammon N."/>
            <person name="Israni S."/>
            <person name="Dalin E."/>
            <person name="Tice H."/>
            <person name="Pitluck S."/>
            <person name="Kiss H."/>
            <person name="Brettin T."/>
            <person name="Bruce D."/>
            <person name="Han C."/>
            <person name="Tapia R."/>
            <person name="Gilna P."/>
            <person name="Schmutz J."/>
            <person name="Larimer F."/>
            <person name="Land M."/>
            <person name="Hauser L."/>
            <person name="Kyrpides N."/>
            <person name="Mikhailova N."/>
            <person name="Richardson P."/>
            <person name="Mackenzie C."/>
            <person name="Choudhary M."/>
            <person name="Donohue T.J."/>
            <person name="Kaplan S."/>
        </authorList>
    </citation>
    <scope>NUCLEOTIDE SEQUENCE [LARGE SCALE GENOMIC DNA]</scope>
    <source>
        <strain>ATCC 17029 / ATH 2.4.9</strain>
    </source>
</reference>
<feature type="chain" id="PRO_0000348820" description="tRNA-cytidine(32) 2-sulfurtransferase">
    <location>
        <begin position="1"/>
        <end position="292"/>
    </location>
</feature>
<feature type="short sequence motif" description="PP-loop motif" evidence="1">
    <location>
        <begin position="53"/>
        <end position="58"/>
    </location>
</feature>
<feature type="binding site" evidence="1">
    <location>
        <position position="128"/>
    </location>
    <ligand>
        <name>[4Fe-4S] cluster</name>
        <dbReference type="ChEBI" id="CHEBI:49883"/>
    </ligand>
</feature>
<feature type="binding site" evidence="1">
    <location>
        <position position="131"/>
    </location>
    <ligand>
        <name>[4Fe-4S] cluster</name>
        <dbReference type="ChEBI" id="CHEBI:49883"/>
    </ligand>
</feature>
<feature type="binding site" evidence="1">
    <location>
        <position position="219"/>
    </location>
    <ligand>
        <name>[4Fe-4S] cluster</name>
        <dbReference type="ChEBI" id="CHEBI:49883"/>
    </ligand>
</feature>